<gene>
    <name evidence="1" type="primary">rad50</name>
    <name type="ordered locus">VNG_0514C</name>
</gene>
<protein>
    <recommendedName>
        <fullName evidence="1">DNA double-strand break repair Rad50 ATPase</fullName>
    </recommendedName>
</protein>
<accession>Q9HRW3</accession>
<evidence type="ECO:0000255" key="1">
    <source>
        <dbReference type="HAMAP-Rule" id="MF_00449"/>
    </source>
</evidence>
<evidence type="ECO:0000256" key="2">
    <source>
        <dbReference type="SAM" id="MobiDB-lite"/>
    </source>
</evidence>
<evidence type="ECO:0000269" key="3">
    <source>
    </source>
</evidence>
<keyword id="KW-0067">ATP-binding</keyword>
<keyword id="KW-0175">Coiled coil</keyword>
<keyword id="KW-0227">DNA damage</keyword>
<keyword id="KW-0234">DNA repair</keyword>
<keyword id="KW-0378">Hydrolase</keyword>
<keyword id="KW-0479">Metal-binding</keyword>
<keyword id="KW-0547">Nucleotide-binding</keyword>
<keyword id="KW-1185">Reference proteome</keyword>
<keyword id="KW-0862">Zinc</keyword>
<dbReference type="EMBL" id="AE004437">
    <property type="protein sequence ID" value="AAG19045.1"/>
    <property type="molecule type" value="Genomic_DNA"/>
</dbReference>
<dbReference type="PIR" id="A84210">
    <property type="entry name" value="A84210"/>
</dbReference>
<dbReference type="RefSeq" id="WP_010902341.1">
    <property type="nucleotide sequence ID" value="NC_002607.1"/>
</dbReference>
<dbReference type="STRING" id="64091.VNG_0514C"/>
<dbReference type="PaxDb" id="64091-VNG_0514C"/>
<dbReference type="GeneID" id="68693417"/>
<dbReference type="KEGG" id="hal:VNG_0514C"/>
<dbReference type="PATRIC" id="fig|64091.14.peg.392"/>
<dbReference type="HOGENOM" id="CLU_004785_0_1_2"/>
<dbReference type="InParanoid" id="Q9HRW3"/>
<dbReference type="OrthoDB" id="25344at2157"/>
<dbReference type="Proteomes" id="UP000000554">
    <property type="component" value="Chromosome"/>
</dbReference>
<dbReference type="GO" id="GO:1990391">
    <property type="term" value="C:DNA repair complex"/>
    <property type="evidence" value="ECO:0000318"/>
    <property type="project" value="GO_Central"/>
</dbReference>
<dbReference type="GO" id="GO:0005524">
    <property type="term" value="F:ATP binding"/>
    <property type="evidence" value="ECO:0007669"/>
    <property type="project" value="UniProtKB-UniRule"/>
</dbReference>
<dbReference type="GO" id="GO:0016887">
    <property type="term" value="F:ATP hydrolysis activity"/>
    <property type="evidence" value="ECO:0007669"/>
    <property type="project" value="UniProtKB-UniRule"/>
</dbReference>
<dbReference type="GO" id="GO:0004529">
    <property type="term" value="F:DNA exonuclease activity"/>
    <property type="evidence" value="ECO:0000318"/>
    <property type="project" value="GO_Central"/>
</dbReference>
<dbReference type="GO" id="GO:0008270">
    <property type="term" value="F:zinc ion binding"/>
    <property type="evidence" value="ECO:0007669"/>
    <property type="project" value="UniProtKB-UniRule"/>
</dbReference>
<dbReference type="GO" id="GO:0006281">
    <property type="term" value="P:DNA repair"/>
    <property type="evidence" value="ECO:0000318"/>
    <property type="project" value="GO_Central"/>
</dbReference>
<dbReference type="GO" id="GO:0006302">
    <property type="term" value="P:double-strand break repair"/>
    <property type="evidence" value="ECO:0007669"/>
    <property type="project" value="UniProtKB-UniRule"/>
</dbReference>
<dbReference type="Gene3D" id="1.10.287.510">
    <property type="entry name" value="Helix hairpin bin"/>
    <property type="match status" value="1"/>
</dbReference>
<dbReference type="Gene3D" id="3.40.50.300">
    <property type="entry name" value="P-loop containing nucleotide triphosphate hydrolases"/>
    <property type="match status" value="2"/>
</dbReference>
<dbReference type="HAMAP" id="MF_00449">
    <property type="entry name" value="RAD50"/>
    <property type="match status" value="1"/>
</dbReference>
<dbReference type="InterPro" id="IPR053480">
    <property type="entry name" value="DSB_repair_ATPase"/>
</dbReference>
<dbReference type="InterPro" id="IPR027417">
    <property type="entry name" value="P-loop_NTPase"/>
</dbReference>
<dbReference type="InterPro" id="IPR038729">
    <property type="entry name" value="Rad50/SbcC_AAA"/>
</dbReference>
<dbReference type="InterPro" id="IPR022982">
    <property type="entry name" value="Rad50_ATPase_archaeal"/>
</dbReference>
<dbReference type="InterPro" id="IPR013134">
    <property type="entry name" value="Zn_hook_RAD50"/>
</dbReference>
<dbReference type="NCBIfam" id="NF002572">
    <property type="entry name" value="PRK02224.1"/>
    <property type="match status" value="1"/>
</dbReference>
<dbReference type="NCBIfam" id="NF041035">
    <property type="entry name" value="Rad50_Halo"/>
    <property type="match status" value="1"/>
</dbReference>
<dbReference type="PANTHER" id="PTHR32114">
    <property type="entry name" value="ABC TRANSPORTER ABCH.3"/>
    <property type="match status" value="1"/>
</dbReference>
<dbReference type="PANTHER" id="PTHR32114:SF2">
    <property type="entry name" value="ABC TRANSPORTER ABCH.3"/>
    <property type="match status" value="1"/>
</dbReference>
<dbReference type="Pfam" id="PF13476">
    <property type="entry name" value="AAA_23"/>
    <property type="match status" value="1"/>
</dbReference>
<dbReference type="SUPFAM" id="SSF52540">
    <property type="entry name" value="P-loop containing nucleoside triphosphate hydrolases"/>
    <property type="match status" value="1"/>
</dbReference>
<dbReference type="SUPFAM" id="SSF75712">
    <property type="entry name" value="Rad50 coiled-coil Zn hook"/>
    <property type="match status" value="1"/>
</dbReference>
<dbReference type="PROSITE" id="PS51131">
    <property type="entry name" value="ZN_HOOK"/>
    <property type="match status" value="1"/>
</dbReference>
<sequence>MRFTRLSLSNFKCYADAAVSLDPGVTVIHGLNGSGKSSLLDACFFALYGTTALDTTLADAVTIGAETAEIDLHFEHAGGDYHVHRRIRASGGRAQTAACVLETPTDRIDGVTDVEAHISGLLRMDAEAFVNCAYVRQGEVNKLINAAPSTRQDMIDALLQLGKLEEYRQRAGDARLGVEDVKSNVEGQLDRLADQIADKEAADPHDRLASHNTALAEVTADIEHFEAEREQARQTRDDAADVLERYEESRTALADVEETIADVREAVAEAERERETLADRVSDHRERASDLDDEAAALAADLGLDDPDAEDASAERDAVADQREAVAERVREVAPAVSRLTEQADSAADDAATLDERAETLREEAAALDAEADDAAAKRDDAAARIEALDADIEAAMAAFDDAPVAFGAAEAFLDDATAERDELRERVATLRADRQSAADRVAEAEALLDEGKCPECGQPVEGAPHVERVTDDRERVAELDAELADVEDELDAVAQRVDRGESLVAAEDRVDDLEQQRERAVERRDEQADIADAKRDQAAEKRDRAADLDAEAEDARADAAAKRDAADEKRETLAALNADQTALKERLDALADLVDRLEAAADAREAAQRLAEKRAALAAQNEQRRDRLSELRERKRTLDSEFDADRIETARADKDRAEDYLEQVEPKLQALREDRDDLQAKIGAAENAIAELESLREEHERVQSRHQDLQAVHDEVTALETMYGELRAELRQQNVSKLERLLNETFELVYQNDSYARIELSGEYELTVYQKDGEPLEPAQLSGGERALFNLSLRTAVYRLLAEGIEGDAPLPPLILDEPTVFLDSGHVSQLVELVESMRRLGVEQIVVVSHDDELVAAADDVVRVAKDATSNRSRVSTPEHI</sequence>
<comment type="function">
    <text evidence="1">Part of the Rad50/Mre11 complex, which is involved in the early steps of DNA double-strand break (DSB) repair. Rad50 controls the balance between DNA end bridging and DNA resection via ATP-dependent structural rearrangements of the Rad50/Mre11 complex.</text>
</comment>
<comment type="cofactor">
    <cofactor evidence="1">
        <name>Zn(2+)</name>
        <dbReference type="ChEBI" id="CHEBI:29105"/>
    </cofactor>
    <text evidence="1">Binds 1 zinc ion per homodimer.</text>
</comment>
<comment type="subunit">
    <text evidence="1">Homodimer. Forms a heterotetramer composed of two Mre11 subunits and two Rad50 subunits.</text>
</comment>
<comment type="domain">
    <text evidence="1">The two conserved Cys that bind zinc constitute the zinc-hook, which separates the large intramolecular coiled coil regions. The 2 Cys residues coordinate one molecule of zinc with the help of the 2 Cys residues of the zinc-hook of another Rad50 molecule, thereby forming a V-shaped homodimer.</text>
</comment>
<comment type="disruption phenotype">
    <text evidence="3">Mutants show a slight growth defect, but do not show increased sensitivity to ionizing radiation or alkylating agents. Show decreased rates of survival after UV-C irradiation.</text>
</comment>
<comment type="similarity">
    <text evidence="1">Belongs to the SMC family. RAD50 subfamily.</text>
</comment>
<name>RAD50_HALSA</name>
<feature type="chain" id="PRO_0000138651" description="DNA double-strand break repair Rad50 ATPase">
    <location>
        <begin position="1"/>
        <end position="883"/>
    </location>
</feature>
<feature type="domain" description="Zinc-hook" evidence="1">
    <location>
        <begin position="407"/>
        <end position="506"/>
    </location>
</feature>
<feature type="region of interest" description="Disordered" evidence="2">
    <location>
        <begin position="271"/>
        <end position="290"/>
    </location>
</feature>
<feature type="region of interest" description="Disordered" evidence="2">
    <location>
        <begin position="305"/>
        <end position="326"/>
    </location>
</feature>
<feature type="region of interest" description="Disordered" evidence="2">
    <location>
        <begin position="508"/>
        <end position="565"/>
    </location>
</feature>
<feature type="coiled-coil region" evidence="1">
    <location>
        <begin position="244"/>
        <end position="283"/>
    </location>
</feature>
<feature type="coiled-coil region" evidence="1">
    <location>
        <begin position="336"/>
        <end position="389"/>
    </location>
</feature>
<feature type="coiled-coil region" evidence="1">
    <location>
        <begin position="414"/>
        <end position="452"/>
    </location>
</feature>
<feature type="coiled-coil region" evidence="1">
    <location>
        <begin position="571"/>
        <end position="604"/>
    </location>
</feature>
<feature type="coiled-coil region" evidence="1">
    <location>
        <begin position="668"/>
        <end position="720"/>
    </location>
</feature>
<feature type="compositionally biased region" description="Basic and acidic residues" evidence="2">
    <location>
        <begin position="313"/>
        <end position="326"/>
    </location>
</feature>
<feature type="binding site" evidence="1">
    <location>
        <position position="12"/>
    </location>
    <ligand>
        <name>ATP</name>
        <dbReference type="ChEBI" id="CHEBI:30616"/>
    </ligand>
</feature>
<feature type="binding site" evidence="1">
    <location>
        <begin position="32"/>
        <end position="38"/>
    </location>
    <ligand>
        <name>ATP</name>
        <dbReference type="ChEBI" id="CHEBI:30616"/>
    </ligand>
</feature>
<feature type="binding site" evidence="1">
    <location>
        <position position="137"/>
    </location>
    <ligand>
        <name>ATP</name>
        <dbReference type="ChEBI" id="CHEBI:30616"/>
    </ligand>
</feature>
<feature type="binding site" evidence="1">
    <location>
        <position position="454"/>
    </location>
    <ligand>
        <name>Zn(2+)</name>
        <dbReference type="ChEBI" id="CHEBI:29105"/>
    </ligand>
</feature>
<feature type="binding site" evidence="1">
    <location>
        <position position="457"/>
    </location>
    <ligand>
        <name>Zn(2+)</name>
        <dbReference type="ChEBI" id="CHEBI:29105"/>
    </ligand>
</feature>
<proteinExistence type="inferred from homology"/>
<reference key="1">
    <citation type="journal article" date="2000" name="Proc. Natl. Acad. Sci. U.S.A.">
        <title>Genome sequence of Halobacterium species NRC-1.</title>
        <authorList>
            <person name="Ng W.V."/>
            <person name="Kennedy S.P."/>
            <person name="Mahairas G.G."/>
            <person name="Berquist B."/>
            <person name="Pan M."/>
            <person name="Shukla H.D."/>
            <person name="Lasky S.R."/>
            <person name="Baliga N.S."/>
            <person name="Thorsson V."/>
            <person name="Sbrogna J."/>
            <person name="Swartzell S."/>
            <person name="Weir D."/>
            <person name="Hall J."/>
            <person name="Dahl T.A."/>
            <person name="Welti R."/>
            <person name="Goo Y.A."/>
            <person name="Leithauser B."/>
            <person name="Keller K."/>
            <person name="Cruz R."/>
            <person name="Danson M.J."/>
            <person name="Hough D.W."/>
            <person name="Maddocks D.G."/>
            <person name="Jablonski P.E."/>
            <person name="Krebs M.P."/>
            <person name="Angevine C.M."/>
            <person name="Dale H."/>
            <person name="Isenbarger T.A."/>
            <person name="Peck R.F."/>
            <person name="Pohlschroder M."/>
            <person name="Spudich J.L."/>
            <person name="Jung K.-H."/>
            <person name="Alam M."/>
            <person name="Freitas T."/>
            <person name="Hou S."/>
            <person name="Daniels C.J."/>
            <person name="Dennis P.P."/>
            <person name="Omer A.D."/>
            <person name="Ebhardt H."/>
            <person name="Lowe T.M."/>
            <person name="Liang P."/>
            <person name="Riley M."/>
            <person name="Hood L."/>
            <person name="DasSarma S."/>
        </authorList>
    </citation>
    <scope>NUCLEOTIDE SEQUENCE [LARGE SCALE GENOMIC DNA]</scope>
    <source>
        <strain>ATCC 700922 / JCM 11081 / NRC-1</strain>
    </source>
</reference>
<reference key="2">
    <citation type="journal article" date="2008" name="J. Bacteriol.">
        <title>Rad50 is not essential for the Mre11-dependent repair of DNA double-strand breaks in Halobacterium sp. strain NRC-1.</title>
        <authorList>
            <person name="Kish A."/>
            <person name="DiRuggiero J."/>
        </authorList>
    </citation>
    <scope>DISRUPTION PHENOTYPE</scope>
    <source>
        <strain>ATCC 700922 / JCM 11081 / NRC-1</strain>
    </source>
</reference>
<organism>
    <name type="scientific">Halobacterium salinarum (strain ATCC 700922 / JCM 11081 / NRC-1)</name>
    <name type="common">Halobacterium halobium</name>
    <dbReference type="NCBI Taxonomy" id="64091"/>
    <lineage>
        <taxon>Archaea</taxon>
        <taxon>Methanobacteriati</taxon>
        <taxon>Methanobacteriota</taxon>
        <taxon>Stenosarchaea group</taxon>
        <taxon>Halobacteria</taxon>
        <taxon>Halobacteriales</taxon>
        <taxon>Halobacteriaceae</taxon>
        <taxon>Halobacterium</taxon>
        <taxon>Halobacterium salinarum NRC-34001</taxon>
    </lineage>
</organism>